<organism evidence="7">
    <name type="scientific">Caenorhabditis elegans</name>
    <dbReference type="NCBI Taxonomy" id="6239"/>
    <lineage>
        <taxon>Eukaryota</taxon>
        <taxon>Metazoa</taxon>
        <taxon>Ecdysozoa</taxon>
        <taxon>Nematoda</taxon>
        <taxon>Chromadorea</taxon>
        <taxon>Rhabditida</taxon>
        <taxon>Rhabditina</taxon>
        <taxon>Rhabditomorpha</taxon>
        <taxon>Rhabditoidea</taxon>
        <taxon>Rhabditidae</taxon>
        <taxon>Peloderinae</taxon>
        <taxon>Caenorhabditis</taxon>
    </lineage>
</organism>
<gene>
    <name evidence="9" type="primary">epg-6</name>
    <name evidence="9" type="ORF">Y39A1A.1</name>
</gene>
<sequence>MSKKEETIFFRIEKENRPESSKKEEDENSTEEMTTLNHASVTLDHSAFAIADKDGFKMYQLNPLHFRMYKDYVIKVGPVRLVKQDGNSRRIIYVSALAGGRFAQNNLMIFDVARNEEYFEITTPSRYGPITNIHVSPNRLVALNPNRMFVWTYPDDIKQIRSEDIRSNPKGISAMSYDPTTAACYLAYPGFKTGSVQIMHLNALTARESKSPIVIEAHLTDIAQVALNCQGTLVATGSTKGTVIRVFDARTKGPLYELRRGTVQAHLQCMAFSPCSSYLAVASDKGTLHMFGIRDAEPQKKKNVLERSRGSSSIVKIQLDRPVMAIGFGKIPETPKNLQSIIAICADATYWRHEFYKDNTGNFTSHFGSYDELIEVANDSSFFRTPVE</sequence>
<keyword id="KW-0025">Alternative splicing</keyword>
<keyword id="KW-0072">Autophagy</keyword>
<keyword id="KW-0963">Cytoplasm</keyword>
<keyword id="KW-0446">Lipid-binding</keyword>
<keyword id="KW-0472">Membrane</keyword>
<keyword id="KW-1185">Reference proteome</keyword>
<keyword id="KW-0677">Repeat</keyword>
<keyword id="KW-0853">WD repeat</keyword>
<feature type="chain" id="PRO_0000446905" description="Ectopic P granules protein 6">
    <location>
        <begin position="1"/>
        <end position="388"/>
    </location>
</feature>
<feature type="repeat" description="WD 1" evidence="1">
    <location>
        <begin position="217"/>
        <end position="257"/>
    </location>
</feature>
<feature type="repeat" description="WD 2" evidence="1">
    <location>
        <begin position="262"/>
        <end position="301"/>
    </location>
</feature>
<feature type="region of interest" description="Disordered" evidence="2">
    <location>
        <begin position="1"/>
        <end position="33"/>
    </location>
</feature>
<feature type="region of interest" description="Required for atg-2 binding" evidence="3">
    <location>
        <begin position="265"/>
        <end position="328"/>
    </location>
</feature>
<feature type="short sequence motif" description="LRRG motif" evidence="3">
    <location>
        <begin position="258"/>
        <end position="261"/>
    </location>
</feature>
<feature type="compositionally biased region" description="Basic and acidic residues" evidence="2">
    <location>
        <begin position="1"/>
        <end position="25"/>
    </location>
</feature>
<feature type="splice variant" id="VSP_060116" description="In isoform d." evidence="5">
    <location>
        <begin position="1"/>
        <end position="107"/>
    </location>
</feature>
<feature type="splice variant" id="VSP_060117" description="In isoform c." evidence="5">
    <location>
        <begin position="1"/>
        <end position="32"/>
    </location>
</feature>
<feature type="splice variant" id="VSP_060118" description="In isoform a, isoform c and isoform d." evidence="5">
    <original>IPE</original>
    <variation>K</variation>
    <location>
        <begin position="331"/>
        <end position="333"/>
    </location>
</feature>
<feature type="mutagenesis site" description="In bp242; defective degradation of protein aggregates. Suppresses the lysosomal accumulation of ribosomal RNA and ribosomal proteins in a rnst-2 qx245 mutant background." evidence="3 4">
    <location>
        <begin position="161"/>
        <end position="388"/>
    </location>
</feature>
<feature type="mutagenesis site" description="Reduces, but does not abolish, phosphatidylinositol binding." evidence="3">
    <original>RR</original>
    <variation>KK</variation>
    <location>
        <begin position="259"/>
        <end position="260"/>
    </location>
</feature>
<feature type="mutagenesis site" description="Abolishes atg-2 binding." evidence="3">
    <location>
        <begin position="265"/>
        <end position="328"/>
    </location>
</feature>
<dbReference type="EMBL" id="BX284603">
    <property type="protein sequence ID" value="CAA21019.3"/>
    <property type="molecule type" value="Genomic_DNA"/>
</dbReference>
<dbReference type="EMBL" id="BX284603">
    <property type="protein sequence ID" value="CAD60426.1"/>
    <property type="molecule type" value="Genomic_DNA"/>
</dbReference>
<dbReference type="EMBL" id="BX284603">
    <property type="protein sequence ID" value="CAI06057.1"/>
    <property type="molecule type" value="Genomic_DNA"/>
</dbReference>
<dbReference type="EMBL" id="BX284603">
    <property type="protein sequence ID" value="CBX53348.1"/>
    <property type="molecule type" value="Genomic_DNA"/>
</dbReference>
<dbReference type="PIR" id="T26730">
    <property type="entry name" value="T26730"/>
</dbReference>
<dbReference type="RefSeq" id="NP_001022835.1">
    <property type="nucleotide sequence ID" value="NM_001027664.3"/>
</dbReference>
<dbReference type="RefSeq" id="NP_001255083.1">
    <molecule id="Q86MP3-4"/>
    <property type="nucleotide sequence ID" value="NM_001268154.3"/>
</dbReference>
<dbReference type="RefSeq" id="NP_001379429.1">
    <molecule id="Q86MP3-3"/>
    <property type="nucleotide sequence ID" value="NM_001392195.1"/>
</dbReference>
<dbReference type="RefSeq" id="NP_499335.2">
    <molecule id="Q86MP3-2"/>
    <property type="nucleotide sequence ID" value="NM_066934.4"/>
</dbReference>
<dbReference type="RefSeq" id="NP_871659.1">
    <molecule id="Q86MP3-1"/>
    <property type="nucleotide sequence ID" value="NM_181930.8"/>
</dbReference>
<dbReference type="SMR" id="Q86MP3"/>
<dbReference type="ComplexPortal" id="CPX-3823">
    <property type="entry name" value="epg-6-atg-2 complex"/>
</dbReference>
<dbReference type="FunCoup" id="Q86MP3">
    <property type="interactions" value="2847"/>
</dbReference>
<dbReference type="IntAct" id="Q86MP3">
    <property type="interactions" value="1"/>
</dbReference>
<dbReference type="MINT" id="Q86MP3"/>
<dbReference type="STRING" id="6239.Y39A1A.1b.1"/>
<dbReference type="PaxDb" id="6239-Y39A1A.1b"/>
<dbReference type="PeptideAtlas" id="Q86MP3"/>
<dbReference type="EnsemblMetazoa" id="Y39A1A.1a.1">
    <molecule id="Q86MP3-2"/>
    <property type="protein sequence ID" value="Y39A1A.1a.1"/>
    <property type="gene ID" value="WBGene00012641"/>
</dbReference>
<dbReference type="EnsemblMetazoa" id="Y39A1A.1b.1">
    <molecule id="Q86MP3-1"/>
    <property type="protein sequence ID" value="Y39A1A.1b.1"/>
    <property type="gene ID" value="WBGene00012641"/>
</dbReference>
<dbReference type="EnsemblMetazoa" id="Y39A1A.1c.1">
    <molecule id="Q86MP3-3"/>
    <property type="protein sequence ID" value="Y39A1A.1c.1"/>
    <property type="gene ID" value="WBGene00012641"/>
</dbReference>
<dbReference type="EnsemblMetazoa" id="Y39A1A.1d.1">
    <molecule id="Q86MP3-4"/>
    <property type="protein sequence ID" value="Y39A1A.1d.1"/>
    <property type="gene ID" value="WBGene00012641"/>
</dbReference>
<dbReference type="GeneID" id="189705"/>
<dbReference type="KEGG" id="cel:CELE_Y39A1A.1"/>
<dbReference type="UCSC" id="Y39A1A.1a">
    <property type="organism name" value="c. elegans"/>
</dbReference>
<dbReference type="AGR" id="WB:WBGene00012641"/>
<dbReference type="CTD" id="189705"/>
<dbReference type="WormBase" id="Y39A1A.1a">
    <molecule id="Q86MP3-2"/>
    <property type="protein sequence ID" value="CE33215"/>
    <property type="gene ID" value="WBGene00012641"/>
    <property type="gene designation" value="epg-6"/>
</dbReference>
<dbReference type="WormBase" id="Y39A1A.1b">
    <molecule id="Q86MP3-1"/>
    <property type="protein sequence ID" value="CE33216"/>
    <property type="gene ID" value="WBGene00012641"/>
    <property type="gene designation" value="epg-6"/>
</dbReference>
<dbReference type="WormBase" id="Y39A1A.1c">
    <molecule id="Q86MP3-3"/>
    <property type="protein sequence ID" value="CE37799"/>
    <property type="gene ID" value="WBGene00012641"/>
    <property type="gene designation" value="epg-6"/>
</dbReference>
<dbReference type="WormBase" id="Y39A1A.1d">
    <molecule id="Q86MP3-4"/>
    <property type="protein sequence ID" value="CE45443"/>
    <property type="gene ID" value="WBGene00012641"/>
    <property type="gene designation" value="epg-6"/>
</dbReference>
<dbReference type="eggNOG" id="KOG2111">
    <property type="taxonomic scope" value="Eukaryota"/>
</dbReference>
<dbReference type="GeneTree" id="ENSGT00940000155657"/>
<dbReference type="HOGENOM" id="CLU_025895_2_0_1"/>
<dbReference type="InParanoid" id="Q86MP3"/>
<dbReference type="OMA" id="LEHKHFF"/>
<dbReference type="OrthoDB" id="1667587at2759"/>
<dbReference type="PhylomeDB" id="Q86MP3"/>
<dbReference type="Reactome" id="R-CEL-1632852">
    <property type="pathway name" value="Macroautophagy"/>
</dbReference>
<dbReference type="PRO" id="PR:Q86MP3"/>
<dbReference type="Proteomes" id="UP000001940">
    <property type="component" value="Chromosome III"/>
</dbReference>
<dbReference type="Bgee" id="WBGene00012641">
    <property type="expression patterns" value="Expressed in embryo and 4 other cell types or tissues"/>
</dbReference>
<dbReference type="GO" id="GO:0005737">
    <property type="term" value="C:cytoplasm"/>
    <property type="evidence" value="ECO:0000314"/>
    <property type="project" value="WormBase"/>
</dbReference>
<dbReference type="GO" id="GO:0005829">
    <property type="term" value="C:cytosol"/>
    <property type="evidence" value="ECO:0000318"/>
    <property type="project" value="GO_Central"/>
</dbReference>
<dbReference type="GO" id="GO:0034045">
    <property type="term" value="C:phagophore assembly site membrane"/>
    <property type="evidence" value="ECO:0000318"/>
    <property type="project" value="GO_Central"/>
</dbReference>
<dbReference type="GO" id="GO:0080025">
    <property type="term" value="F:phosphatidylinositol-3,5-bisphosphate binding"/>
    <property type="evidence" value="ECO:0000314"/>
    <property type="project" value="WormBase"/>
</dbReference>
<dbReference type="GO" id="GO:0032266">
    <property type="term" value="F:phosphatidylinositol-3-phosphate binding"/>
    <property type="evidence" value="ECO:0000314"/>
    <property type="project" value="WormBase"/>
</dbReference>
<dbReference type="GO" id="GO:0070273">
    <property type="term" value="F:phosphatidylinositol-4-phosphate binding"/>
    <property type="evidence" value="ECO:0000314"/>
    <property type="project" value="WormBase"/>
</dbReference>
<dbReference type="GO" id="GO:0010314">
    <property type="term" value="F:phosphatidylinositol-5-phosphate binding"/>
    <property type="evidence" value="ECO:0000314"/>
    <property type="project" value="WormBase"/>
</dbReference>
<dbReference type="GO" id="GO:0030674">
    <property type="term" value="F:protein-macromolecule adaptor activity"/>
    <property type="evidence" value="ECO:0000318"/>
    <property type="project" value="GO_Central"/>
</dbReference>
<dbReference type="GO" id="GO:0000045">
    <property type="term" value="P:autophagosome assembly"/>
    <property type="evidence" value="ECO:0000315"/>
    <property type="project" value="WormBase"/>
</dbReference>
<dbReference type="GO" id="GO:0000422">
    <property type="term" value="P:autophagy of mitochondrion"/>
    <property type="evidence" value="ECO:0000318"/>
    <property type="project" value="GO_Central"/>
</dbReference>
<dbReference type="GO" id="GO:0061723">
    <property type="term" value="P:glycophagy"/>
    <property type="evidence" value="ECO:0000318"/>
    <property type="project" value="GO_Central"/>
</dbReference>
<dbReference type="GO" id="GO:0016236">
    <property type="term" value="P:macroautophagy"/>
    <property type="evidence" value="ECO:0000303"/>
    <property type="project" value="ComplexPortal"/>
</dbReference>
<dbReference type="GO" id="GO:0044804">
    <property type="term" value="P:nucleophagy"/>
    <property type="evidence" value="ECO:0000318"/>
    <property type="project" value="GO_Central"/>
</dbReference>
<dbReference type="GO" id="GO:0000425">
    <property type="term" value="P:pexophagy"/>
    <property type="evidence" value="ECO:0000318"/>
    <property type="project" value="GO_Central"/>
</dbReference>
<dbReference type="GO" id="GO:0034497">
    <property type="term" value="P:protein localization to phagophore assembly site"/>
    <property type="evidence" value="ECO:0000318"/>
    <property type="project" value="GO_Central"/>
</dbReference>
<dbReference type="Gene3D" id="2.130.10.10">
    <property type="entry name" value="YVTN repeat-like/Quinoprotein amine dehydrogenase"/>
    <property type="match status" value="1"/>
</dbReference>
<dbReference type="InterPro" id="IPR048720">
    <property type="entry name" value="PROPPIN"/>
</dbReference>
<dbReference type="InterPro" id="IPR015943">
    <property type="entry name" value="WD40/YVTN_repeat-like_dom_sf"/>
</dbReference>
<dbReference type="InterPro" id="IPR036322">
    <property type="entry name" value="WD40_repeat_dom_sf"/>
</dbReference>
<dbReference type="InterPro" id="IPR001680">
    <property type="entry name" value="WD40_rpt"/>
</dbReference>
<dbReference type="PANTHER" id="PTHR11227">
    <property type="entry name" value="WD-REPEAT PROTEIN INTERACTING WITH PHOSPHOINOSIDES WIPI -RELATED"/>
    <property type="match status" value="1"/>
</dbReference>
<dbReference type="Pfam" id="PF21032">
    <property type="entry name" value="PROPPIN"/>
    <property type="match status" value="1"/>
</dbReference>
<dbReference type="SMART" id="SM00320">
    <property type="entry name" value="WD40"/>
    <property type="match status" value="2"/>
</dbReference>
<dbReference type="SUPFAM" id="SSF50978">
    <property type="entry name" value="WD40 repeat-like"/>
    <property type="match status" value="1"/>
</dbReference>
<name>EPG6_CAEEL</name>
<reference evidence="7" key="1">
    <citation type="journal article" date="1998" name="Science">
        <title>Genome sequence of the nematode C. elegans: a platform for investigating biology.</title>
        <authorList>
            <consortium name="The C. elegans sequencing consortium"/>
        </authorList>
    </citation>
    <scope>NUCLEOTIDE SEQUENCE [LARGE SCALE GENOMIC DNA]</scope>
    <source>
        <strain evidence="7">Bristol N2</strain>
    </source>
</reference>
<reference evidence="5" key="2">
    <citation type="journal article" date="2011" name="Dev. Cell">
        <title>The WD40 repeat PtdIns(3)P-binding protein EPG-6 regulates progression of omegasomes to autophagosomes.</title>
        <authorList>
            <person name="Lu Q."/>
            <person name="Yang P."/>
            <person name="Huang X."/>
            <person name="Hu W."/>
            <person name="Guo B."/>
            <person name="Wu F."/>
            <person name="Lin L."/>
            <person name="Kovacs A.L."/>
            <person name="Yu L."/>
            <person name="Zhang H."/>
        </authorList>
    </citation>
    <scope>FUNCTION</scope>
    <scope>INTERACTION WITH ATG-2</scope>
    <scope>SUBCELLULAR LOCATION</scope>
    <scope>TISSUE SPECIFICITY</scope>
    <scope>DEVELOPMENTAL STAGE</scope>
    <scope>DOMAIN</scope>
    <scope>MUTAGENESIS OF 161-ARG--GLU-388; 259-ARG-ARG-260 AND 265-ALA--PHE-328</scope>
</reference>
<reference key="3">
    <citation type="journal article" date="2018" name="Elife">
        <title>Autophagy-dependent ribosomal RNA degradation is essential for maintaining nucleotide homeostasis during C. elegans development.</title>
        <authorList>
            <person name="Liu Y."/>
            <person name="Zou W."/>
            <person name="Yang P."/>
            <person name="Wang L."/>
            <person name="Ma Y."/>
            <person name="Zhang H."/>
            <person name="Wang X."/>
        </authorList>
    </citation>
    <scope>FUNCTION</scope>
    <scope>MUTAGENESIS OF 161-ARG--GLU-388</scope>
</reference>
<comment type="function">
    <text evidence="3 4">Component of the epg-6/atg-2 complex, which is involved in the generation of autophagosomes from omegasomes and in the distribution of atg-9 and atg-13 during the autophagy-mediated degradation of protein aggregates (PubMed:21802374). Binds to phosphatidylinositols on preautophagosomes, which are early autophagic structures, to promote autophagosome formation (PubMed:21802374). In particular, binds with high affinity to phosphatidylinositols including phosphatidylinositol 3-phosphate (PtdIns(3)P) and phosphatidylinositol 5-phosphate (PtdIns(5)P), but more weakly to phosphatidylinositol 4-phosphate (PtdIns(4)P) and phosphatidylinositol 3,5-bisphosphate (PtdIns(3,5)P2) (PubMed:21802374). Involved in autophagy-mediated degradation of ribosomal RNA and ribosomal proteins in lysosomes, which is essential for maintaining nucleotide homeostasis (PubMed:30102152).</text>
</comment>
<comment type="subunit">
    <text evidence="3">Interacts with atg-2; the interaction is direct.</text>
</comment>
<comment type="subcellular location">
    <subcellularLocation>
        <location evidence="3">Cytoplasm</location>
    </subcellularLocation>
    <subcellularLocation>
        <location evidence="6">Preautophagosomal structure membrane</location>
        <topology evidence="6">Peripheral membrane protein</topology>
    </subcellularLocation>
    <text evidence="3">Localizes to the cytoplasm of all cells during embryogenesis.</text>
</comment>
<comment type="alternative products">
    <event type="alternative splicing"/>
    <isoform>
        <id>Q86MP3-1</id>
        <name evidence="9">b</name>
        <sequence type="displayed"/>
    </isoform>
    <isoform>
        <id>Q86MP3-2</id>
        <name evidence="8">a</name>
        <sequence type="described" ref="VSP_060118"/>
    </isoform>
    <isoform>
        <id>Q86MP3-3</id>
        <name evidence="10">c</name>
        <sequence type="described" ref="VSP_060117 VSP_060118"/>
    </isoform>
    <isoform>
        <id>Q86MP3-4</id>
        <name evidence="11">d</name>
        <sequence type="described" ref="VSP_060116 VSP_060118"/>
    </isoform>
</comment>
<comment type="tissue specificity">
    <text evidence="3">Widely expressed in tissues including pharyngeal, muscle and neuronal tissues.</text>
</comment>
<comment type="developmental stage">
    <text evidence="3">Expressed throughout development.</text>
</comment>
<comment type="domain">
    <text evidence="3">The LRRG motif is required for recruitment to phosphatidylinositols including phosphatidylinositol 3-phosphate (PtdIns(3)P), phosphatidylinositol 5-phosphate (PtdIns(5)P), phosphatidylinositol 4-phosphate (PtdIns(4)P) and phosphatidylinositol 3,5-bisphosphate (PtdIns(3,5)P2).</text>
</comment>
<comment type="similarity">
    <text evidence="5">Belongs to the WD repeat PROPPIN family.</text>
</comment>
<accession>Q86MP3</accession>
<accession>E3CTH5</accession>
<accession>Q5DTE8</accession>
<accession>Q9XX21</accession>
<evidence type="ECO:0000255" key="1"/>
<evidence type="ECO:0000256" key="2">
    <source>
        <dbReference type="SAM" id="MobiDB-lite"/>
    </source>
</evidence>
<evidence type="ECO:0000269" key="3">
    <source>
    </source>
</evidence>
<evidence type="ECO:0000269" key="4">
    <source>
    </source>
</evidence>
<evidence type="ECO:0000305" key="5"/>
<evidence type="ECO:0000305" key="6">
    <source>
    </source>
</evidence>
<evidence type="ECO:0000312" key="7">
    <source>
        <dbReference type="Proteomes" id="UP000001940"/>
    </source>
</evidence>
<evidence type="ECO:0000312" key="8">
    <source>
        <dbReference type="WormBase" id="Y39A1A.1a"/>
    </source>
</evidence>
<evidence type="ECO:0000312" key="9">
    <source>
        <dbReference type="WormBase" id="Y39A1A.1b"/>
    </source>
</evidence>
<evidence type="ECO:0000312" key="10">
    <source>
        <dbReference type="WormBase" id="Y39A1A.1c"/>
    </source>
</evidence>
<evidence type="ECO:0000312" key="11">
    <source>
        <dbReference type="WormBase" id="Y39A1A.1d"/>
    </source>
</evidence>
<proteinExistence type="evidence at protein level"/>
<protein>
    <recommendedName>
        <fullName evidence="9">Ectopic P granules protein 6</fullName>
    </recommendedName>
</protein>